<organism>
    <name type="scientific">Arabidopsis thaliana</name>
    <name type="common">Mouse-ear cress</name>
    <dbReference type="NCBI Taxonomy" id="3702"/>
    <lineage>
        <taxon>Eukaryota</taxon>
        <taxon>Viridiplantae</taxon>
        <taxon>Streptophyta</taxon>
        <taxon>Embryophyta</taxon>
        <taxon>Tracheophyta</taxon>
        <taxon>Spermatophyta</taxon>
        <taxon>Magnoliopsida</taxon>
        <taxon>eudicotyledons</taxon>
        <taxon>Gunneridae</taxon>
        <taxon>Pentapetalae</taxon>
        <taxon>rosids</taxon>
        <taxon>malvids</taxon>
        <taxon>Brassicales</taxon>
        <taxon>Brassicaceae</taxon>
        <taxon>Camelineae</taxon>
        <taxon>Arabidopsis</taxon>
    </lineage>
</organism>
<protein>
    <recommendedName>
        <fullName>DNA-directed RNA polymerases II, IV and V subunit 12</fullName>
    </recommendedName>
    <alternativeName>
        <fullName>DNA-directed RNA Polymerase II subunit K</fullName>
    </alternativeName>
</protein>
<reference key="1">
    <citation type="journal article" date="1998" name="DNA Res.">
        <title>Structural analysis of Arabidopsis thaliana chromosome 5. IV. Sequence features of the regions of 1,456,315 bp covered by nineteen physically assigned P1 and TAC clones.</title>
        <authorList>
            <person name="Sato S."/>
            <person name="Kaneko T."/>
            <person name="Kotani H."/>
            <person name="Nakamura Y."/>
            <person name="Asamizu E."/>
            <person name="Miyajima N."/>
            <person name="Tabata S."/>
        </authorList>
    </citation>
    <scope>NUCLEOTIDE SEQUENCE [LARGE SCALE GENOMIC DNA]</scope>
    <source>
        <strain>cv. Columbia</strain>
    </source>
</reference>
<reference key="2">
    <citation type="journal article" date="2017" name="Plant J.">
        <title>Araport11: a complete reannotation of the Arabidopsis thaliana reference genome.</title>
        <authorList>
            <person name="Cheng C.Y."/>
            <person name="Krishnakumar V."/>
            <person name="Chan A.P."/>
            <person name="Thibaud-Nissen F."/>
            <person name="Schobel S."/>
            <person name="Town C.D."/>
        </authorList>
    </citation>
    <scope>GENOME REANNOTATION</scope>
    <source>
        <strain>cv. Columbia</strain>
    </source>
</reference>
<reference key="3">
    <citation type="journal article" date="2003" name="Science">
        <title>Empirical analysis of transcriptional activity in the Arabidopsis genome.</title>
        <authorList>
            <person name="Yamada K."/>
            <person name="Lim J."/>
            <person name="Dale J.M."/>
            <person name="Chen H."/>
            <person name="Shinn P."/>
            <person name="Palm C.J."/>
            <person name="Southwick A.M."/>
            <person name="Wu H.C."/>
            <person name="Kim C.J."/>
            <person name="Nguyen M."/>
            <person name="Pham P.K."/>
            <person name="Cheuk R.F."/>
            <person name="Karlin-Newmann G."/>
            <person name="Liu S.X."/>
            <person name="Lam B."/>
            <person name="Sakano H."/>
            <person name="Wu T."/>
            <person name="Yu G."/>
            <person name="Miranda M."/>
            <person name="Quach H.L."/>
            <person name="Tripp M."/>
            <person name="Chang C.H."/>
            <person name="Lee J.M."/>
            <person name="Toriumi M.J."/>
            <person name="Chan M.M."/>
            <person name="Tang C.C."/>
            <person name="Onodera C.S."/>
            <person name="Deng J.M."/>
            <person name="Akiyama K."/>
            <person name="Ansari Y."/>
            <person name="Arakawa T."/>
            <person name="Banh J."/>
            <person name="Banno F."/>
            <person name="Bowser L."/>
            <person name="Brooks S.Y."/>
            <person name="Carninci P."/>
            <person name="Chao Q."/>
            <person name="Choy N."/>
            <person name="Enju A."/>
            <person name="Goldsmith A.D."/>
            <person name="Gurjal M."/>
            <person name="Hansen N.F."/>
            <person name="Hayashizaki Y."/>
            <person name="Johnson-Hopson C."/>
            <person name="Hsuan V.W."/>
            <person name="Iida K."/>
            <person name="Karnes M."/>
            <person name="Khan S."/>
            <person name="Koesema E."/>
            <person name="Ishida J."/>
            <person name="Jiang P.X."/>
            <person name="Jones T."/>
            <person name="Kawai J."/>
            <person name="Kamiya A."/>
            <person name="Meyers C."/>
            <person name="Nakajima M."/>
            <person name="Narusaka M."/>
            <person name="Seki M."/>
            <person name="Sakurai T."/>
            <person name="Satou M."/>
            <person name="Tamse R."/>
            <person name="Vaysberg M."/>
            <person name="Wallender E.K."/>
            <person name="Wong C."/>
            <person name="Yamamura Y."/>
            <person name="Yuan S."/>
            <person name="Shinozaki K."/>
            <person name="Davis R.W."/>
            <person name="Theologis A."/>
            <person name="Ecker J.R."/>
        </authorList>
    </citation>
    <scope>NUCLEOTIDE SEQUENCE [LARGE SCALE MRNA]</scope>
    <source>
        <strain>cv. Columbia</strain>
    </source>
</reference>
<reference key="4">
    <citation type="submission" date="2002-03" db="EMBL/GenBank/DDBJ databases">
        <title>Full-length cDNA from Arabidopsis thaliana.</title>
        <authorList>
            <person name="Brover V.V."/>
            <person name="Troukhan M.E."/>
            <person name="Alexandrov N.A."/>
            <person name="Lu Y.-P."/>
            <person name="Flavell R.B."/>
            <person name="Feldmann K.A."/>
        </authorList>
    </citation>
    <scope>NUCLEOTIDE SEQUENCE [LARGE SCALE MRNA]</scope>
</reference>
<reference key="5">
    <citation type="journal article" date="2007" name="Mol. Cell">
        <title>Purification of a plant mediator from Arabidopsis thaliana identifies PFT1 as the Med25 subunit.</title>
        <authorList>
            <person name="Baeckstroem S."/>
            <person name="Elfving N."/>
            <person name="Nilsson R."/>
            <person name="Wingsle G."/>
            <person name="Bjoerklund S."/>
        </authorList>
    </citation>
    <scope>IDENTIFICATION BY MASS SPECTROMETRY</scope>
    <scope>INTERACTION WITH THE MEDIATOR COMPLEX</scope>
</reference>
<reference key="6">
    <citation type="journal article" date="2009" name="Mol. Cell">
        <title>Subunit compositions of the RNA-silencing enzymes Pol IV and Pol V reveal their origins as specialized forms of RNA polymerase II.</title>
        <authorList>
            <person name="Ream T.S."/>
            <person name="Haag J.R."/>
            <person name="Wierzbicki A.T."/>
            <person name="Nicora C.D."/>
            <person name="Norbeck A.D."/>
            <person name="Zhu J.K."/>
            <person name="Hagen G."/>
            <person name="Guilfoyle T.J."/>
            <person name="Pasa-Tolic L."/>
            <person name="Pikaard C.S."/>
        </authorList>
    </citation>
    <scope>FUNCTION</scope>
    <scope>IDENTIFICATION BY MASS SPECTROMETRY</scope>
    <scope>SUBUNIT</scope>
    <scope>NOMENCLATURE</scope>
</reference>
<reference key="7">
    <citation type="journal article" date="2011" name="PLoS Genet.">
        <title>SHH1, a homeodomain protein required for DNA methylation, as well as RDR2, RDM4, and chromatin remodeling factors, associate with RNA polymerase IV.</title>
        <authorList>
            <person name="Law J.A."/>
            <person name="Vashisht A.A."/>
            <person name="Wohlschlegel J.A."/>
            <person name="Jacobsen S.E."/>
        </authorList>
    </citation>
    <scope>IDENTIFICATION BY MASS SPECTROMETRY</scope>
    <scope>INTERACTION WITH NRPD1</scope>
    <scope>SUBUNIT</scope>
</reference>
<proteinExistence type="evidence at protein level"/>
<keyword id="KW-0002">3D-structure</keyword>
<keyword id="KW-0240">DNA-directed RNA polymerase</keyword>
<keyword id="KW-0479">Metal-binding</keyword>
<keyword id="KW-0539">Nucleus</keyword>
<keyword id="KW-1185">Reference proteome</keyword>
<keyword id="KW-0804">Transcription</keyword>
<keyword id="KW-0862">Zinc</keyword>
<accession>Q9FLM8</accession>
<name>NRPBC_ARATH</name>
<feature type="chain" id="PRO_0000423320" description="DNA-directed RNA polymerases II, IV and V subunit 12">
    <location>
        <begin position="1"/>
        <end position="51"/>
    </location>
</feature>
<feature type="binding site" evidence="1">
    <location>
        <position position="12"/>
    </location>
    <ligand>
        <name>Zn(2+)</name>
        <dbReference type="ChEBI" id="CHEBI:29105"/>
    </ligand>
</feature>
<feature type="binding site" evidence="1">
    <location>
        <position position="15"/>
    </location>
    <ligand>
        <name>Zn(2+)</name>
        <dbReference type="ChEBI" id="CHEBI:29105"/>
    </ligand>
</feature>
<feature type="binding site" evidence="1">
    <location>
        <position position="29"/>
    </location>
    <ligand>
        <name>Zn(2+)</name>
        <dbReference type="ChEBI" id="CHEBI:29105"/>
    </ligand>
</feature>
<feature type="binding site" evidence="1">
    <location>
        <position position="32"/>
    </location>
    <ligand>
        <name>Zn(2+)</name>
        <dbReference type="ChEBI" id="CHEBI:29105"/>
    </ligand>
</feature>
<feature type="strand" evidence="6">
    <location>
        <begin position="10"/>
        <end position="15"/>
    </location>
</feature>
<feature type="strand" evidence="7">
    <location>
        <begin position="23"/>
        <end position="25"/>
    </location>
</feature>
<feature type="turn" evidence="7">
    <location>
        <begin position="30"/>
        <end position="32"/>
    </location>
</feature>
<feature type="strand" evidence="6">
    <location>
        <begin position="36"/>
        <end position="39"/>
    </location>
</feature>
<feature type="strand" evidence="6">
    <location>
        <begin position="46"/>
        <end position="49"/>
    </location>
</feature>
<sequence>MDPAPEPVTYVCGDCGQENTLKSGDVIQCRECGYRILYKKRTRRVVQYEAR</sequence>
<gene>
    <name type="primary">NRPB12</name>
    <name type="synonym">NRPD12</name>
    <name type="synonym">NRPE12</name>
    <name type="ordered locus">At5g41010</name>
    <name type="ORF">MEE6.8</name>
</gene>
<evidence type="ECO:0000250" key="1"/>
<evidence type="ECO:0000269" key="2">
    <source>
    </source>
</evidence>
<evidence type="ECO:0000269" key="3">
    <source>
    </source>
</evidence>
<evidence type="ECO:0000269" key="4">
    <source>
    </source>
</evidence>
<evidence type="ECO:0000305" key="5"/>
<evidence type="ECO:0007829" key="6">
    <source>
        <dbReference type="PDB" id="7EU0"/>
    </source>
</evidence>
<evidence type="ECO:0007829" key="7">
    <source>
        <dbReference type="PDB" id="8XMD"/>
    </source>
</evidence>
<dbReference type="EMBL" id="AB010072">
    <property type="protein sequence ID" value="BAB09703.1"/>
    <property type="molecule type" value="Genomic_DNA"/>
</dbReference>
<dbReference type="EMBL" id="CP002688">
    <property type="protein sequence ID" value="AED94625.1"/>
    <property type="molecule type" value="Genomic_DNA"/>
</dbReference>
<dbReference type="EMBL" id="AY045954">
    <property type="protein sequence ID" value="AAK76628.1"/>
    <property type="molecule type" value="mRNA"/>
</dbReference>
<dbReference type="EMBL" id="AY079307">
    <property type="protein sequence ID" value="AAL85038.1"/>
    <property type="molecule type" value="mRNA"/>
</dbReference>
<dbReference type="EMBL" id="AY084743">
    <property type="protein sequence ID" value="AAM67289.1"/>
    <property type="molecule type" value="mRNA"/>
</dbReference>
<dbReference type="RefSeq" id="NP_198917.1">
    <property type="nucleotide sequence ID" value="NM_123466.3"/>
</dbReference>
<dbReference type="PDB" id="7EU0">
    <property type="method" value="EM"/>
    <property type="resolution" value="3.16 A"/>
    <property type="chains" value="L=1-51"/>
</dbReference>
<dbReference type="PDB" id="7EU1">
    <property type="method" value="EM"/>
    <property type="resolution" value="3.86 A"/>
    <property type="chains" value="L=1-51"/>
</dbReference>
<dbReference type="PDB" id="8HYJ">
    <property type="method" value="EM"/>
    <property type="resolution" value="4.30 A"/>
    <property type="chains" value="L=1-51"/>
</dbReference>
<dbReference type="PDB" id="8XMB">
    <property type="method" value="EM"/>
    <property type="resolution" value="3.40 A"/>
    <property type="chains" value="L=1-51"/>
</dbReference>
<dbReference type="PDB" id="8XMC">
    <property type="method" value="EM"/>
    <property type="resolution" value="3.10 A"/>
    <property type="chains" value="L=1-51"/>
</dbReference>
<dbReference type="PDB" id="8XMD">
    <property type="method" value="EM"/>
    <property type="resolution" value="3.40 A"/>
    <property type="chains" value="L=1-51"/>
</dbReference>
<dbReference type="PDB" id="8XME">
    <property type="method" value="EM"/>
    <property type="resolution" value="3.10 A"/>
    <property type="chains" value="L=1-51"/>
</dbReference>
<dbReference type="PDBsum" id="7EU0"/>
<dbReference type="PDBsum" id="7EU1"/>
<dbReference type="PDBsum" id="8HYJ"/>
<dbReference type="PDBsum" id="8XMB"/>
<dbReference type="PDBsum" id="8XMC"/>
<dbReference type="PDBsum" id="8XMD"/>
<dbReference type="PDBsum" id="8XME"/>
<dbReference type="EMDB" id="EMD-31305"/>
<dbReference type="EMDB" id="EMD-31306"/>
<dbReference type="EMDB" id="EMD-35086"/>
<dbReference type="EMDB" id="EMD-38470"/>
<dbReference type="EMDB" id="EMD-38471"/>
<dbReference type="EMDB" id="EMD-38472"/>
<dbReference type="EMDB" id="EMD-38473"/>
<dbReference type="SMR" id="Q9FLM8"/>
<dbReference type="BioGRID" id="19354">
    <property type="interactions" value="2"/>
</dbReference>
<dbReference type="FunCoup" id="Q9FLM8">
    <property type="interactions" value="2915"/>
</dbReference>
<dbReference type="IntAct" id="Q9FLM8">
    <property type="interactions" value="1"/>
</dbReference>
<dbReference type="STRING" id="3702.Q9FLM8"/>
<dbReference type="PaxDb" id="3702-AT5G41010.1"/>
<dbReference type="ProteomicsDB" id="249450"/>
<dbReference type="EnsemblPlants" id="AT5G41010.1">
    <property type="protein sequence ID" value="AT5G41010.1"/>
    <property type="gene ID" value="AT5G41010"/>
</dbReference>
<dbReference type="GeneID" id="834103"/>
<dbReference type="Gramene" id="AT5G41010.1">
    <property type="protein sequence ID" value="AT5G41010.1"/>
    <property type="gene ID" value="AT5G41010"/>
</dbReference>
<dbReference type="KEGG" id="ath:AT5G41010"/>
<dbReference type="Araport" id="AT5G41010"/>
<dbReference type="TAIR" id="AT5G41010">
    <property type="gene designation" value="NRPB12"/>
</dbReference>
<dbReference type="eggNOG" id="KOG3507">
    <property type="taxonomic scope" value="Eukaryota"/>
</dbReference>
<dbReference type="HOGENOM" id="CLU_179456_1_1_1"/>
<dbReference type="InParanoid" id="Q9FLM8"/>
<dbReference type="OMA" id="IYLCADC"/>
<dbReference type="OrthoDB" id="5585087at2759"/>
<dbReference type="PhylomeDB" id="Q9FLM8"/>
<dbReference type="PRO" id="PR:Q9FLM8"/>
<dbReference type="Proteomes" id="UP000006548">
    <property type="component" value="Chromosome 5"/>
</dbReference>
<dbReference type="ExpressionAtlas" id="Q9FLM8">
    <property type="expression patterns" value="baseline and differential"/>
</dbReference>
<dbReference type="GO" id="GO:0005665">
    <property type="term" value="C:RNA polymerase II, core complex"/>
    <property type="evidence" value="ECO:0000314"/>
    <property type="project" value="UniProtKB"/>
</dbReference>
<dbReference type="GO" id="GO:0000418">
    <property type="term" value="C:RNA polymerase IV complex"/>
    <property type="evidence" value="ECO:0000314"/>
    <property type="project" value="UniProtKB"/>
</dbReference>
<dbReference type="GO" id="GO:0003677">
    <property type="term" value="F:DNA binding"/>
    <property type="evidence" value="ECO:0007669"/>
    <property type="project" value="InterPro"/>
</dbReference>
<dbReference type="GO" id="GO:0003899">
    <property type="term" value="F:DNA-directed RNA polymerase activity"/>
    <property type="evidence" value="ECO:0007669"/>
    <property type="project" value="InterPro"/>
</dbReference>
<dbReference type="GO" id="GO:0008270">
    <property type="term" value="F:zinc ion binding"/>
    <property type="evidence" value="ECO:0007669"/>
    <property type="project" value="InterPro"/>
</dbReference>
<dbReference type="GO" id="GO:0006351">
    <property type="term" value="P:DNA-templated transcription"/>
    <property type="evidence" value="ECO:0007669"/>
    <property type="project" value="InterPro"/>
</dbReference>
<dbReference type="FunFam" id="2.20.28.30:FF:000002">
    <property type="entry name" value="DNA-directed RNA polymerases II, IV and V subunit 12"/>
    <property type="match status" value="1"/>
</dbReference>
<dbReference type="Gene3D" id="2.20.28.30">
    <property type="entry name" value="RNA polymerase ii, chain L"/>
    <property type="match status" value="1"/>
</dbReference>
<dbReference type="InterPro" id="IPR006591">
    <property type="entry name" value="RNAP_P/RPABC4"/>
</dbReference>
<dbReference type="InterPro" id="IPR039747">
    <property type="entry name" value="RPABC4"/>
</dbReference>
<dbReference type="InterPro" id="IPR029040">
    <property type="entry name" value="RPABC4/Spt4"/>
</dbReference>
<dbReference type="PANTHER" id="PTHR12056">
    <property type="entry name" value="DNA-DIRECTED RNA POLYMERASES I, II, AND III"/>
    <property type="match status" value="1"/>
</dbReference>
<dbReference type="PANTHER" id="PTHR12056:SF2">
    <property type="entry name" value="GEO11084P1"/>
    <property type="match status" value="1"/>
</dbReference>
<dbReference type="Pfam" id="PF03604">
    <property type="entry name" value="Zn_ribbon_RPAB4"/>
    <property type="match status" value="1"/>
</dbReference>
<dbReference type="SMART" id="SM00659">
    <property type="entry name" value="RPOLCX"/>
    <property type="match status" value="1"/>
</dbReference>
<dbReference type="SUPFAM" id="SSF63393">
    <property type="entry name" value="RNA polymerase subunits"/>
    <property type="match status" value="1"/>
</dbReference>
<comment type="function">
    <text evidence="3">DNA-dependent RNA polymerase catalyzes the transcription of DNA into RNA using the four ribonucleoside triphosphates as substrates. Component of RNA polymerase II which synthesizes mRNA precursors and many functional non-coding RNAs. Pol II is the central component of the basal RNA polymerase II transcription machinery. It is composed of mobile elements that move relative to each other. Component of RNA polymerases IV and V which mediate short-interfering RNAs (siRNA) accumulation and subsequent RNA-directed DNA methylation-dependent (RdDM) transcriptional gene silencing (TGS) of endogenous repeated sequences, including transposable elements.</text>
</comment>
<comment type="subunit">
    <text evidence="2 3 4">Component of the RNA polymerase II, IV and V complexes. Associates with the mediator complex. Interacts with NRPD1.</text>
</comment>
<comment type="subcellular location">
    <subcellularLocation>
        <location evidence="1">Nucleus</location>
    </subcellularLocation>
</comment>
<comment type="similarity">
    <text evidence="5">Belongs to the archaeal Rpo12/eukaryotic RPC10 RNA polymerase subunit family.</text>
</comment>